<protein>
    <recommendedName>
        <fullName evidence="1">Sulfate adenylyltransferase subunit 2</fullName>
        <ecNumber evidence="1">2.7.7.4</ecNumber>
    </recommendedName>
    <alternativeName>
        <fullName evidence="1">ATP-sulfurylase small subunit</fullName>
    </alternativeName>
    <alternativeName>
        <fullName evidence="1">Sulfate adenylate transferase</fullName>
        <shortName evidence="1">SAT</shortName>
    </alternativeName>
</protein>
<gene>
    <name evidence="1" type="primary">cysD</name>
    <name type="ordered locus">VV1_0726</name>
</gene>
<accession>Q8DE72</accession>
<proteinExistence type="inferred from homology"/>
<organism>
    <name type="scientific">Vibrio vulnificus (strain CMCP6)</name>
    <dbReference type="NCBI Taxonomy" id="216895"/>
    <lineage>
        <taxon>Bacteria</taxon>
        <taxon>Pseudomonadati</taxon>
        <taxon>Pseudomonadota</taxon>
        <taxon>Gammaproteobacteria</taxon>
        <taxon>Vibrionales</taxon>
        <taxon>Vibrionaceae</taxon>
        <taxon>Vibrio</taxon>
    </lineage>
</organism>
<sequence>MDQQRLTHLKQLEAESIHIIREVAAEFDNPVMMYSIGKDSSVMLHLARKAFYPGKIPFPLLHVDTDWKFREMIEFRDRTAEKYGFELLVHKNPEGLAMGCSPFTHGSSKHTDIMKTQGLKQALNKYGFDAAFGGARRDEEKSRAKERVYSFRDKNHTWDPKNQRPELWKTYNGQVNKGESIRVFPLSNWTELDIWQYIYLENIEIVPLYLAAKRPVVERDGMLIMVDDDRMKLKEGEVIEEKSVRFRTLGCYPLTGAIESEANTLTGIIEEMLVATSSERQGRAIDHDQSGSMELKKRQGYF</sequence>
<reference key="1">
    <citation type="submission" date="2002-12" db="EMBL/GenBank/DDBJ databases">
        <title>Complete genome sequence of Vibrio vulnificus CMCP6.</title>
        <authorList>
            <person name="Rhee J.H."/>
            <person name="Kim S.Y."/>
            <person name="Chung S.S."/>
            <person name="Kim J.J."/>
            <person name="Moon Y.H."/>
            <person name="Jeong H."/>
            <person name="Choy H.E."/>
        </authorList>
    </citation>
    <scope>NUCLEOTIDE SEQUENCE [LARGE SCALE GENOMIC DNA]</scope>
    <source>
        <strain>CMCP6</strain>
    </source>
</reference>
<comment type="function">
    <text evidence="1">With CysN forms the ATP sulfurylase (ATPS) that catalyzes the adenylation of sulfate producing adenosine 5'-phosphosulfate (APS) and diphosphate, the first enzymatic step in sulfur assimilation pathway. APS synthesis involves the formation of a high-energy phosphoric-sulfuric acid anhydride bond driven by GTP hydrolysis by CysN coupled to ATP hydrolysis by CysD.</text>
</comment>
<comment type="catalytic activity">
    <reaction evidence="1">
        <text>sulfate + ATP + H(+) = adenosine 5'-phosphosulfate + diphosphate</text>
        <dbReference type="Rhea" id="RHEA:18133"/>
        <dbReference type="ChEBI" id="CHEBI:15378"/>
        <dbReference type="ChEBI" id="CHEBI:16189"/>
        <dbReference type="ChEBI" id="CHEBI:30616"/>
        <dbReference type="ChEBI" id="CHEBI:33019"/>
        <dbReference type="ChEBI" id="CHEBI:58243"/>
        <dbReference type="EC" id="2.7.7.4"/>
    </reaction>
</comment>
<comment type="pathway">
    <text evidence="1">Sulfur metabolism; hydrogen sulfide biosynthesis; sulfite from sulfate: step 1/3.</text>
</comment>
<comment type="subunit">
    <text evidence="1">Heterodimer composed of CysD, the smaller subunit, and CysN.</text>
</comment>
<comment type="similarity">
    <text evidence="1">Belongs to the PAPS reductase family. CysD subfamily.</text>
</comment>
<name>CYSD_VIBVU</name>
<dbReference type="EC" id="2.7.7.4" evidence="1"/>
<dbReference type="EMBL" id="AE016795">
    <property type="protein sequence ID" value="AAO09235.1"/>
    <property type="molecule type" value="Genomic_DNA"/>
</dbReference>
<dbReference type="RefSeq" id="WP_011078801.1">
    <property type="nucleotide sequence ID" value="NC_004459.3"/>
</dbReference>
<dbReference type="SMR" id="Q8DE72"/>
<dbReference type="GeneID" id="93895031"/>
<dbReference type="KEGG" id="vvu:VV1_0726"/>
<dbReference type="HOGENOM" id="CLU_043026_0_0_6"/>
<dbReference type="UniPathway" id="UPA00140">
    <property type="reaction ID" value="UER00204"/>
</dbReference>
<dbReference type="Proteomes" id="UP000002275">
    <property type="component" value="Chromosome 1"/>
</dbReference>
<dbReference type="GO" id="GO:0005524">
    <property type="term" value="F:ATP binding"/>
    <property type="evidence" value="ECO:0007669"/>
    <property type="project" value="UniProtKB-KW"/>
</dbReference>
<dbReference type="GO" id="GO:0004781">
    <property type="term" value="F:sulfate adenylyltransferase (ATP) activity"/>
    <property type="evidence" value="ECO:0007669"/>
    <property type="project" value="UniProtKB-UniRule"/>
</dbReference>
<dbReference type="GO" id="GO:0070814">
    <property type="term" value="P:hydrogen sulfide biosynthetic process"/>
    <property type="evidence" value="ECO:0007669"/>
    <property type="project" value="UniProtKB-UniRule"/>
</dbReference>
<dbReference type="GO" id="GO:0000103">
    <property type="term" value="P:sulfate assimilation"/>
    <property type="evidence" value="ECO:0007669"/>
    <property type="project" value="UniProtKB-UniRule"/>
</dbReference>
<dbReference type="CDD" id="cd23946">
    <property type="entry name" value="Sulfate_adenylyltransferase_2"/>
    <property type="match status" value="1"/>
</dbReference>
<dbReference type="FunFam" id="3.40.50.620:FF:000002">
    <property type="entry name" value="Sulfate adenylyltransferase subunit 2"/>
    <property type="match status" value="1"/>
</dbReference>
<dbReference type="Gene3D" id="3.40.50.620">
    <property type="entry name" value="HUPs"/>
    <property type="match status" value="1"/>
</dbReference>
<dbReference type="HAMAP" id="MF_00064">
    <property type="entry name" value="Sulf_adenylyltr_sub2"/>
    <property type="match status" value="1"/>
</dbReference>
<dbReference type="InterPro" id="IPR002500">
    <property type="entry name" value="PAPS_reduct_dom"/>
</dbReference>
<dbReference type="InterPro" id="IPR014729">
    <property type="entry name" value="Rossmann-like_a/b/a_fold"/>
</dbReference>
<dbReference type="InterPro" id="IPR011784">
    <property type="entry name" value="SO4_adenylTrfase_ssu"/>
</dbReference>
<dbReference type="InterPro" id="IPR050128">
    <property type="entry name" value="Sulfate_adenylyltrnsfr_sub2"/>
</dbReference>
<dbReference type="NCBIfam" id="TIGR02039">
    <property type="entry name" value="CysD"/>
    <property type="match status" value="1"/>
</dbReference>
<dbReference type="NCBIfam" id="NF003587">
    <property type="entry name" value="PRK05253.1"/>
    <property type="match status" value="1"/>
</dbReference>
<dbReference type="NCBIfam" id="NF009214">
    <property type="entry name" value="PRK12563.1"/>
    <property type="match status" value="1"/>
</dbReference>
<dbReference type="PANTHER" id="PTHR43196">
    <property type="entry name" value="SULFATE ADENYLYLTRANSFERASE SUBUNIT 2"/>
    <property type="match status" value="1"/>
</dbReference>
<dbReference type="PANTHER" id="PTHR43196:SF1">
    <property type="entry name" value="SULFATE ADENYLYLTRANSFERASE SUBUNIT 2"/>
    <property type="match status" value="1"/>
</dbReference>
<dbReference type="Pfam" id="PF01507">
    <property type="entry name" value="PAPS_reduct"/>
    <property type="match status" value="1"/>
</dbReference>
<dbReference type="PIRSF" id="PIRSF002936">
    <property type="entry name" value="CysDAde_trans"/>
    <property type="match status" value="1"/>
</dbReference>
<dbReference type="SUPFAM" id="SSF52402">
    <property type="entry name" value="Adenine nucleotide alpha hydrolases-like"/>
    <property type="match status" value="1"/>
</dbReference>
<keyword id="KW-0067">ATP-binding</keyword>
<keyword id="KW-0547">Nucleotide-binding</keyword>
<keyword id="KW-0548">Nucleotidyltransferase</keyword>
<keyword id="KW-0808">Transferase</keyword>
<evidence type="ECO:0000255" key="1">
    <source>
        <dbReference type="HAMAP-Rule" id="MF_00064"/>
    </source>
</evidence>
<evidence type="ECO:0000256" key="2">
    <source>
        <dbReference type="SAM" id="MobiDB-lite"/>
    </source>
</evidence>
<feature type="chain" id="PRO_0000100679" description="Sulfate adenylyltransferase subunit 2">
    <location>
        <begin position="1"/>
        <end position="302"/>
    </location>
</feature>
<feature type="region of interest" description="Disordered" evidence="2">
    <location>
        <begin position="280"/>
        <end position="302"/>
    </location>
</feature>